<proteinExistence type="inferred from homology"/>
<sequence length="451" mass="51096">MSLPTSLWDKCLGYLRDEIPPQQYNTWIRPLHAIESKQNGLLLLAPNRFVLDWINERFLNRITELLDELSDTPPQIRLQIGSRSTEMPTKNSHEPSHRKAAAPPAGTTISHTQANINSNFTFDSFVEGKSNQLARAAATQVAENPGQAYNPLFIYGGVGLGKTHLMHAVGNAILRKDSSKKVLYLHSERFVADMIKALQHNAMNEFKRFYRSLNALLIDDIQFFAGKDRSQEEFFHTFNALLDGQQQIILTCDRYPKEINGLEERLQSRFGWGLTVAIEPPELETRVAILMSKAEQLKVHLPHEVAFFIAKHIQSNVRELEGALKRVIANAHFTGQSITVDFTREALKDLLTLQARLITIENIQKTVAEYYKIKVADLLAKRRNRSVARPRQMAMALAKELTNHSLPEIGDAFGGRDHTTVLHACRKVKELLATSLDILEDYKNLMRILSG</sequence>
<accession>A9KEU8</accession>
<evidence type="ECO:0000255" key="1">
    <source>
        <dbReference type="HAMAP-Rule" id="MF_00377"/>
    </source>
</evidence>
<evidence type="ECO:0000256" key="2">
    <source>
        <dbReference type="SAM" id="MobiDB-lite"/>
    </source>
</evidence>
<reference key="1">
    <citation type="journal article" date="2009" name="Infect. Immun.">
        <title>Comparative genomics reveal extensive transposon-mediated genomic plasticity and diversity among potential effector proteins within the genus Coxiella.</title>
        <authorList>
            <person name="Beare P.A."/>
            <person name="Unsworth N."/>
            <person name="Andoh M."/>
            <person name="Voth D.E."/>
            <person name="Omsland A."/>
            <person name="Gilk S.D."/>
            <person name="Williams K.P."/>
            <person name="Sobral B.W."/>
            <person name="Kupko J.J. III"/>
            <person name="Porcella S.F."/>
            <person name="Samuel J.E."/>
            <person name="Heinzen R.A."/>
        </authorList>
    </citation>
    <scope>NUCLEOTIDE SEQUENCE [LARGE SCALE GENOMIC DNA]</scope>
    <source>
        <strain>Dugway 5J108-111</strain>
    </source>
</reference>
<protein>
    <recommendedName>
        <fullName evidence="1">Chromosomal replication initiator protein DnaA</fullName>
    </recommendedName>
</protein>
<dbReference type="EMBL" id="CP000733">
    <property type="protein sequence ID" value="ABS77189.1"/>
    <property type="molecule type" value="Genomic_DNA"/>
</dbReference>
<dbReference type="RefSeq" id="WP_005769932.1">
    <property type="nucleotide sequence ID" value="NC_009727.1"/>
</dbReference>
<dbReference type="SMR" id="A9KEU8"/>
<dbReference type="KEGG" id="cbd:CBUD_0001"/>
<dbReference type="HOGENOM" id="CLU_026910_0_1_6"/>
<dbReference type="Proteomes" id="UP000008555">
    <property type="component" value="Chromosome"/>
</dbReference>
<dbReference type="GO" id="GO:0005737">
    <property type="term" value="C:cytoplasm"/>
    <property type="evidence" value="ECO:0007669"/>
    <property type="project" value="UniProtKB-SubCell"/>
</dbReference>
<dbReference type="GO" id="GO:0005886">
    <property type="term" value="C:plasma membrane"/>
    <property type="evidence" value="ECO:0007669"/>
    <property type="project" value="TreeGrafter"/>
</dbReference>
<dbReference type="GO" id="GO:0005524">
    <property type="term" value="F:ATP binding"/>
    <property type="evidence" value="ECO:0007669"/>
    <property type="project" value="UniProtKB-UniRule"/>
</dbReference>
<dbReference type="GO" id="GO:0016887">
    <property type="term" value="F:ATP hydrolysis activity"/>
    <property type="evidence" value="ECO:0007669"/>
    <property type="project" value="InterPro"/>
</dbReference>
<dbReference type="GO" id="GO:0003688">
    <property type="term" value="F:DNA replication origin binding"/>
    <property type="evidence" value="ECO:0007669"/>
    <property type="project" value="UniProtKB-UniRule"/>
</dbReference>
<dbReference type="GO" id="GO:0008289">
    <property type="term" value="F:lipid binding"/>
    <property type="evidence" value="ECO:0007669"/>
    <property type="project" value="UniProtKB-KW"/>
</dbReference>
<dbReference type="GO" id="GO:0006270">
    <property type="term" value="P:DNA replication initiation"/>
    <property type="evidence" value="ECO:0007669"/>
    <property type="project" value="UniProtKB-UniRule"/>
</dbReference>
<dbReference type="GO" id="GO:0006275">
    <property type="term" value="P:regulation of DNA replication"/>
    <property type="evidence" value="ECO:0007669"/>
    <property type="project" value="UniProtKB-UniRule"/>
</dbReference>
<dbReference type="CDD" id="cd00009">
    <property type="entry name" value="AAA"/>
    <property type="match status" value="1"/>
</dbReference>
<dbReference type="CDD" id="cd06571">
    <property type="entry name" value="Bac_DnaA_C"/>
    <property type="match status" value="1"/>
</dbReference>
<dbReference type="FunFam" id="1.10.1750.10:FF:000001">
    <property type="entry name" value="Chromosomal replication initiator protein DnaA"/>
    <property type="match status" value="1"/>
</dbReference>
<dbReference type="FunFam" id="1.10.8.60:FF:000003">
    <property type="entry name" value="Chromosomal replication initiator protein DnaA"/>
    <property type="match status" value="1"/>
</dbReference>
<dbReference type="FunFam" id="3.40.50.300:FF:000103">
    <property type="entry name" value="Chromosomal replication initiator protein DnaA"/>
    <property type="match status" value="1"/>
</dbReference>
<dbReference type="Gene3D" id="1.10.1750.10">
    <property type="match status" value="1"/>
</dbReference>
<dbReference type="Gene3D" id="1.10.8.60">
    <property type="match status" value="1"/>
</dbReference>
<dbReference type="Gene3D" id="3.30.300.180">
    <property type="match status" value="1"/>
</dbReference>
<dbReference type="Gene3D" id="3.40.50.300">
    <property type="entry name" value="P-loop containing nucleotide triphosphate hydrolases"/>
    <property type="match status" value="1"/>
</dbReference>
<dbReference type="HAMAP" id="MF_00377">
    <property type="entry name" value="DnaA_bact"/>
    <property type="match status" value="1"/>
</dbReference>
<dbReference type="InterPro" id="IPR003593">
    <property type="entry name" value="AAA+_ATPase"/>
</dbReference>
<dbReference type="InterPro" id="IPR001957">
    <property type="entry name" value="Chromosome_initiator_DnaA"/>
</dbReference>
<dbReference type="InterPro" id="IPR020591">
    <property type="entry name" value="Chromosome_initiator_DnaA-like"/>
</dbReference>
<dbReference type="InterPro" id="IPR018312">
    <property type="entry name" value="Chromosome_initiator_DnaA_CS"/>
</dbReference>
<dbReference type="InterPro" id="IPR013159">
    <property type="entry name" value="DnaA_C"/>
</dbReference>
<dbReference type="InterPro" id="IPR013317">
    <property type="entry name" value="DnaA_dom"/>
</dbReference>
<dbReference type="InterPro" id="IPR024633">
    <property type="entry name" value="DnaA_N_dom"/>
</dbReference>
<dbReference type="InterPro" id="IPR038454">
    <property type="entry name" value="DnaA_N_sf"/>
</dbReference>
<dbReference type="InterPro" id="IPR027417">
    <property type="entry name" value="P-loop_NTPase"/>
</dbReference>
<dbReference type="InterPro" id="IPR010921">
    <property type="entry name" value="Trp_repressor/repl_initiator"/>
</dbReference>
<dbReference type="NCBIfam" id="TIGR00362">
    <property type="entry name" value="DnaA"/>
    <property type="match status" value="1"/>
</dbReference>
<dbReference type="PANTHER" id="PTHR30050">
    <property type="entry name" value="CHROMOSOMAL REPLICATION INITIATOR PROTEIN DNAA"/>
    <property type="match status" value="1"/>
</dbReference>
<dbReference type="PANTHER" id="PTHR30050:SF2">
    <property type="entry name" value="CHROMOSOMAL REPLICATION INITIATOR PROTEIN DNAA"/>
    <property type="match status" value="1"/>
</dbReference>
<dbReference type="Pfam" id="PF00308">
    <property type="entry name" value="Bac_DnaA"/>
    <property type="match status" value="1"/>
</dbReference>
<dbReference type="Pfam" id="PF08299">
    <property type="entry name" value="Bac_DnaA_C"/>
    <property type="match status" value="1"/>
</dbReference>
<dbReference type="Pfam" id="PF11638">
    <property type="entry name" value="DnaA_N"/>
    <property type="match status" value="1"/>
</dbReference>
<dbReference type="PRINTS" id="PR00051">
    <property type="entry name" value="DNAA"/>
</dbReference>
<dbReference type="SMART" id="SM00382">
    <property type="entry name" value="AAA"/>
    <property type="match status" value="1"/>
</dbReference>
<dbReference type="SMART" id="SM00760">
    <property type="entry name" value="Bac_DnaA_C"/>
    <property type="match status" value="1"/>
</dbReference>
<dbReference type="SUPFAM" id="SSF52540">
    <property type="entry name" value="P-loop containing nucleoside triphosphate hydrolases"/>
    <property type="match status" value="1"/>
</dbReference>
<dbReference type="SUPFAM" id="SSF48295">
    <property type="entry name" value="TrpR-like"/>
    <property type="match status" value="1"/>
</dbReference>
<dbReference type="PROSITE" id="PS01008">
    <property type="entry name" value="DNAA"/>
    <property type="match status" value="1"/>
</dbReference>
<organism>
    <name type="scientific">Coxiella burnetii (strain Dugway 5J108-111)</name>
    <dbReference type="NCBI Taxonomy" id="434922"/>
    <lineage>
        <taxon>Bacteria</taxon>
        <taxon>Pseudomonadati</taxon>
        <taxon>Pseudomonadota</taxon>
        <taxon>Gammaproteobacteria</taxon>
        <taxon>Legionellales</taxon>
        <taxon>Coxiellaceae</taxon>
        <taxon>Coxiella</taxon>
    </lineage>
</organism>
<gene>
    <name evidence="1" type="primary">dnaA</name>
    <name type="ordered locus">CBUD_0001</name>
</gene>
<name>DNAA_COXBN</name>
<keyword id="KW-0067">ATP-binding</keyword>
<keyword id="KW-0963">Cytoplasm</keyword>
<keyword id="KW-0235">DNA replication</keyword>
<keyword id="KW-0238">DNA-binding</keyword>
<keyword id="KW-0446">Lipid-binding</keyword>
<keyword id="KW-0547">Nucleotide-binding</keyword>
<comment type="function">
    <text evidence="1">Plays an essential role in the initiation and regulation of chromosomal replication. ATP-DnaA binds to the origin of replication (oriC) to initiate formation of the DNA replication initiation complex once per cell cycle. Binds the DnaA box (a 9 base pair repeat at the origin) and separates the double-stranded (ds)DNA. Forms a right-handed helical filament on oriC DNA; dsDNA binds to the exterior of the filament while single-stranded (ss)DNA is stabiized in the filament's interior. The ATP-DnaA-oriC complex binds and stabilizes one strand of the AT-rich DNA unwinding element (DUE), permitting loading of DNA polymerase. After initiation quickly degrades to an ADP-DnaA complex that is not apt for DNA replication. Binds acidic phospholipids.</text>
</comment>
<comment type="subunit">
    <text evidence="1">Oligomerizes as a right-handed, spiral filament on DNA at oriC.</text>
</comment>
<comment type="subcellular location">
    <subcellularLocation>
        <location evidence="1">Cytoplasm</location>
    </subcellularLocation>
</comment>
<comment type="domain">
    <text evidence="1">Domain I is involved in oligomerization and binding regulators, domain II is flexibile and of varying length in different bacteria, domain III forms the AAA+ region, while domain IV binds dsDNA.</text>
</comment>
<comment type="similarity">
    <text evidence="1">Belongs to the DnaA family.</text>
</comment>
<feature type="chain" id="PRO_1000079946" description="Chromosomal replication initiator protein DnaA">
    <location>
        <begin position="1"/>
        <end position="451"/>
    </location>
</feature>
<feature type="region of interest" description="Domain I, interacts with DnaA modulators" evidence="1">
    <location>
        <begin position="1"/>
        <end position="72"/>
    </location>
</feature>
<feature type="region of interest" description="Domain II" evidence="1">
    <location>
        <begin position="72"/>
        <end position="114"/>
    </location>
</feature>
<feature type="region of interest" description="Disordered" evidence="2">
    <location>
        <begin position="81"/>
        <end position="106"/>
    </location>
</feature>
<feature type="region of interest" description="Domain III, AAA+ region" evidence="1">
    <location>
        <begin position="115"/>
        <end position="331"/>
    </location>
</feature>
<feature type="region of interest" description="Domain IV, binds dsDNA" evidence="1">
    <location>
        <begin position="332"/>
        <end position="451"/>
    </location>
</feature>
<feature type="compositionally biased region" description="Polar residues" evidence="2">
    <location>
        <begin position="81"/>
        <end position="90"/>
    </location>
</feature>
<feature type="binding site" evidence="1">
    <location>
        <position position="159"/>
    </location>
    <ligand>
        <name>ATP</name>
        <dbReference type="ChEBI" id="CHEBI:30616"/>
    </ligand>
</feature>
<feature type="binding site" evidence="1">
    <location>
        <position position="161"/>
    </location>
    <ligand>
        <name>ATP</name>
        <dbReference type="ChEBI" id="CHEBI:30616"/>
    </ligand>
</feature>
<feature type="binding site" evidence="1">
    <location>
        <position position="162"/>
    </location>
    <ligand>
        <name>ATP</name>
        <dbReference type="ChEBI" id="CHEBI:30616"/>
    </ligand>
</feature>
<feature type="binding site" evidence="1">
    <location>
        <position position="163"/>
    </location>
    <ligand>
        <name>ATP</name>
        <dbReference type="ChEBI" id="CHEBI:30616"/>
    </ligand>
</feature>